<evidence type="ECO:0000255" key="1">
    <source>
        <dbReference type="HAMAP-Rule" id="MF_00494"/>
    </source>
</evidence>
<keyword id="KW-0963">Cytoplasm</keyword>
<keyword id="KW-0570">Pentose shunt</keyword>
<keyword id="KW-1185">Reference proteome</keyword>
<keyword id="KW-0704">Schiff base</keyword>
<keyword id="KW-0808">Transferase</keyword>
<reference key="1">
    <citation type="journal article" date="2007" name="Appl. Environ. Microbiol.">
        <title>Genome sequence of the cellulolytic gliding bacterium Cytophaga hutchinsonii.</title>
        <authorList>
            <person name="Xie G."/>
            <person name="Bruce D.C."/>
            <person name="Challacombe J.F."/>
            <person name="Chertkov O."/>
            <person name="Detter J.C."/>
            <person name="Gilna P."/>
            <person name="Han C.S."/>
            <person name="Lucas S."/>
            <person name="Misra M."/>
            <person name="Myers G.L."/>
            <person name="Richardson P."/>
            <person name="Tapia R."/>
            <person name="Thayer N."/>
            <person name="Thompson L.S."/>
            <person name="Brettin T.S."/>
            <person name="Henrissat B."/>
            <person name="Wilson D.B."/>
            <person name="McBride M.J."/>
        </authorList>
    </citation>
    <scope>NUCLEOTIDE SEQUENCE [LARGE SCALE GENOMIC DNA]</scope>
    <source>
        <strain>ATCC 33406 / DSM 1761 / JCM 20678 / CIP 103989 / IAM 12607 / NBRC 15051 / NCIMB 9469 / D465</strain>
    </source>
</reference>
<comment type="function">
    <text evidence="1">Transaldolase is important for the balance of metabolites in the pentose-phosphate pathway.</text>
</comment>
<comment type="catalytic activity">
    <reaction evidence="1">
        <text>D-sedoheptulose 7-phosphate + D-glyceraldehyde 3-phosphate = D-erythrose 4-phosphate + beta-D-fructose 6-phosphate</text>
        <dbReference type="Rhea" id="RHEA:17053"/>
        <dbReference type="ChEBI" id="CHEBI:16897"/>
        <dbReference type="ChEBI" id="CHEBI:57483"/>
        <dbReference type="ChEBI" id="CHEBI:57634"/>
        <dbReference type="ChEBI" id="CHEBI:59776"/>
        <dbReference type="EC" id="2.2.1.2"/>
    </reaction>
</comment>
<comment type="pathway">
    <text evidence="1">Carbohydrate degradation; pentose phosphate pathway; D-glyceraldehyde 3-phosphate and beta-D-fructose 6-phosphate from D-ribose 5-phosphate and D-xylulose 5-phosphate (non-oxidative stage): step 2/3.</text>
</comment>
<comment type="subcellular location">
    <subcellularLocation>
        <location evidence="1">Cytoplasm</location>
    </subcellularLocation>
</comment>
<comment type="similarity">
    <text evidence="1">Belongs to the transaldolase family. Type 3B subfamily.</text>
</comment>
<gene>
    <name evidence="1" type="primary">tal</name>
    <name type="ordered locus">CHU_2529</name>
</gene>
<protein>
    <recommendedName>
        <fullName evidence="1">Probable transaldolase</fullName>
        <ecNumber evidence="1">2.2.1.2</ecNumber>
    </recommendedName>
</protein>
<proteinExistence type="inferred from homology"/>
<organism>
    <name type="scientific">Cytophaga hutchinsonii (strain ATCC 33406 / DSM 1761 / CIP 103989 / NBRC 15051 / NCIMB 9469 / D465)</name>
    <dbReference type="NCBI Taxonomy" id="269798"/>
    <lineage>
        <taxon>Bacteria</taxon>
        <taxon>Pseudomonadati</taxon>
        <taxon>Bacteroidota</taxon>
        <taxon>Cytophagia</taxon>
        <taxon>Cytophagales</taxon>
        <taxon>Cytophagaceae</taxon>
        <taxon>Cytophaga</taxon>
    </lineage>
</organism>
<dbReference type="EC" id="2.2.1.2" evidence="1"/>
<dbReference type="EMBL" id="CP000383">
    <property type="protein sequence ID" value="ABG59783.1"/>
    <property type="molecule type" value="Genomic_DNA"/>
</dbReference>
<dbReference type="RefSeq" id="WP_011585897.1">
    <property type="nucleotide sequence ID" value="NC_008255.1"/>
</dbReference>
<dbReference type="SMR" id="Q11S31"/>
<dbReference type="STRING" id="269798.CHU_2529"/>
<dbReference type="KEGG" id="chu:CHU_2529"/>
<dbReference type="eggNOG" id="COG0176">
    <property type="taxonomic scope" value="Bacteria"/>
</dbReference>
<dbReference type="HOGENOM" id="CLU_079764_0_0_10"/>
<dbReference type="OrthoDB" id="9807051at2"/>
<dbReference type="UniPathway" id="UPA00115">
    <property type="reaction ID" value="UER00414"/>
</dbReference>
<dbReference type="Proteomes" id="UP000001822">
    <property type="component" value="Chromosome"/>
</dbReference>
<dbReference type="GO" id="GO:0005737">
    <property type="term" value="C:cytoplasm"/>
    <property type="evidence" value="ECO:0007669"/>
    <property type="project" value="UniProtKB-SubCell"/>
</dbReference>
<dbReference type="GO" id="GO:0016832">
    <property type="term" value="F:aldehyde-lyase activity"/>
    <property type="evidence" value="ECO:0007669"/>
    <property type="project" value="InterPro"/>
</dbReference>
<dbReference type="GO" id="GO:0004801">
    <property type="term" value="F:transaldolase activity"/>
    <property type="evidence" value="ECO:0007669"/>
    <property type="project" value="UniProtKB-UniRule"/>
</dbReference>
<dbReference type="GO" id="GO:0005975">
    <property type="term" value="P:carbohydrate metabolic process"/>
    <property type="evidence" value="ECO:0007669"/>
    <property type="project" value="InterPro"/>
</dbReference>
<dbReference type="GO" id="GO:0006098">
    <property type="term" value="P:pentose-phosphate shunt"/>
    <property type="evidence" value="ECO:0007669"/>
    <property type="project" value="UniProtKB-UniRule"/>
</dbReference>
<dbReference type="CDD" id="cd00956">
    <property type="entry name" value="Transaldolase_FSA"/>
    <property type="match status" value="1"/>
</dbReference>
<dbReference type="FunFam" id="3.20.20.70:FF:000018">
    <property type="entry name" value="Probable transaldolase"/>
    <property type="match status" value="1"/>
</dbReference>
<dbReference type="Gene3D" id="3.20.20.70">
    <property type="entry name" value="Aldolase class I"/>
    <property type="match status" value="1"/>
</dbReference>
<dbReference type="HAMAP" id="MF_00494">
    <property type="entry name" value="Transaldolase_3b"/>
    <property type="match status" value="1"/>
</dbReference>
<dbReference type="InterPro" id="IPR013785">
    <property type="entry name" value="Aldolase_TIM"/>
</dbReference>
<dbReference type="InterPro" id="IPR001585">
    <property type="entry name" value="TAL/FSA"/>
</dbReference>
<dbReference type="InterPro" id="IPR022999">
    <property type="entry name" value="Transaldolase_3B"/>
</dbReference>
<dbReference type="InterPro" id="IPR004731">
    <property type="entry name" value="Transaldolase_3B/F6P_aldolase"/>
</dbReference>
<dbReference type="InterPro" id="IPR018225">
    <property type="entry name" value="Transaldolase_AS"/>
</dbReference>
<dbReference type="InterPro" id="IPR033919">
    <property type="entry name" value="TSA/FSA_arc/bac"/>
</dbReference>
<dbReference type="NCBIfam" id="TIGR00875">
    <property type="entry name" value="fsa_talC_mipB"/>
    <property type="match status" value="1"/>
</dbReference>
<dbReference type="PANTHER" id="PTHR10683:SF40">
    <property type="entry name" value="FRUCTOSE-6-PHOSPHATE ALDOLASE 1-RELATED"/>
    <property type="match status" value="1"/>
</dbReference>
<dbReference type="PANTHER" id="PTHR10683">
    <property type="entry name" value="TRANSALDOLASE"/>
    <property type="match status" value="1"/>
</dbReference>
<dbReference type="Pfam" id="PF00923">
    <property type="entry name" value="TAL_FSA"/>
    <property type="match status" value="1"/>
</dbReference>
<dbReference type="SUPFAM" id="SSF51569">
    <property type="entry name" value="Aldolase"/>
    <property type="match status" value="1"/>
</dbReference>
<dbReference type="PROSITE" id="PS01054">
    <property type="entry name" value="TRANSALDOLASE_1"/>
    <property type="match status" value="1"/>
</dbReference>
<feature type="chain" id="PRO_1000126304" description="Probable transaldolase">
    <location>
        <begin position="1"/>
        <end position="218"/>
    </location>
</feature>
<feature type="active site" description="Schiff-base intermediate with substrate" evidence="1">
    <location>
        <position position="87"/>
    </location>
</feature>
<name>TAL_CYTH3</name>
<sequence>MKFFIDTANLNEIREAQELGILDGVTTNPSLMAKEGISGKDNVFKHYKAICDIVDGDVSAEVIATDYKGIIEEGEELITIDPKIVVKVPMIKDGIKAIKYFSQKGIRTNCTLVFSAGQALLAAKAGATYVSPFIGRLDDISQDGMELIAQIVGIYRNYDYQTEVLAASVRHTMHLINCAEVGADVVTCPLNVITGLLNHPLTDSGLAKFLADHKKVNG</sequence>
<accession>Q11S31</accession>